<organism>
    <name type="scientific">Lactobacillus acidophilus (strain ATCC 700396 / NCK56 / N2 / NCFM)</name>
    <dbReference type="NCBI Taxonomy" id="272621"/>
    <lineage>
        <taxon>Bacteria</taxon>
        <taxon>Bacillati</taxon>
        <taxon>Bacillota</taxon>
        <taxon>Bacilli</taxon>
        <taxon>Lactobacillales</taxon>
        <taxon>Lactobacillaceae</taxon>
        <taxon>Lactobacillus</taxon>
    </lineage>
</organism>
<gene>
    <name evidence="1" type="primary">der</name>
    <name type="synonym">engA</name>
    <name type="ordered locus">LBA0969</name>
</gene>
<name>DER_LACAC</name>
<proteinExistence type="inferred from homology"/>
<reference key="1">
    <citation type="journal article" date="2005" name="Proc. Natl. Acad. Sci. U.S.A.">
        <title>Complete genome sequence of the probiotic lactic acid bacterium Lactobacillus acidophilus NCFM.</title>
        <authorList>
            <person name="Altermann E."/>
            <person name="Russell W.M."/>
            <person name="Azcarate-Peril M.A."/>
            <person name="Barrangou R."/>
            <person name="Buck B.L."/>
            <person name="McAuliffe O."/>
            <person name="Souther N."/>
            <person name="Dobson A."/>
            <person name="Duong T."/>
            <person name="Callanan M."/>
            <person name="Lick S."/>
            <person name="Hamrick A."/>
            <person name="Cano R."/>
            <person name="Klaenhammer T.R."/>
        </authorList>
    </citation>
    <scope>NUCLEOTIDE SEQUENCE [LARGE SCALE GENOMIC DNA]</scope>
    <source>
        <strain>ATCC 700396 / NCK56 / N2 / NCFM</strain>
    </source>
</reference>
<feature type="chain" id="PRO_1000011644" description="GTPase Der">
    <location>
        <begin position="1"/>
        <end position="435"/>
    </location>
</feature>
<feature type="domain" description="EngA-type G 1">
    <location>
        <begin position="4"/>
        <end position="167"/>
    </location>
</feature>
<feature type="domain" description="EngA-type G 2">
    <location>
        <begin position="175"/>
        <end position="350"/>
    </location>
</feature>
<feature type="domain" description="KH-like" evidence="1">
    <location>
        <begin position="351"/>
        <end position="435"/>
    </location>
</feature>
<feature type="binding site" evidence="1">
    <location>
        <begin position="10"/>
        <end position="17"/>
    </location>
    <ligand>
        <name>GTP</name>
        <dbReference type="ChEBI" id="CHEBI:37565"/>
        <label>1</label>
    </ligand>
</feature>
<feature type="binding site" evidence="1">
    <location>
        <begin position="57"/>
        <end position="61"/>
    </location>
    <ligand>
        <name>GTP</name>
        <dbReference type="ChEBI" id="CHEBI:37565"/>
        <label>1</label>
    </ligand>
</feature>
<feature type="binding site" evidence="1">
    <location>
        <begin position="119"/>
        <end position="122"/>
    </location>
    <ligand>
        <name>GTP</name>
        <dbReference type="ChEBI" id="CHEBI:37565"/>
        <label>1</label>
    </ligand>
</feature>
<feature type="binding site" evidence="1">
    <location>
        <begin position="181"/>
        <end position="188"/>
    </location>
    <ligand>
        <name>GTP</name>
        <dbReference type="ChEBI" id="CHEBI:37565"/>
        <label>2</label>
    </ligand>
</feature>
<feature type="binding site" evidence="1">
    <location>
        <begin position="228"/>
        <end position="232"/>
    </location>
    <ligand>
        <name>GTP</name>
        <dbReference type="ChEBI" id="CHEBI:37565"/>
        <label>2</label>
    </ligand>
</feature>
<feature type="binding site" evidence="1">
    <location>
        <begin position="293"/>
        <end position="296"/>
    </location>
    <ligand>
        <name>GTP</name>
        <dbReference type="ChEBI" id="CHEBI:37565"/>
        <label>2</label>
    </ligand>
</feature>
<sequence length="435" mass="48996">MVLPVVAIVGQPNVGKSTLFNRIINQRLAIVEDKPGVTRDRNYAQAEWMGHKFDLIDTGGITWEGGKIEDEIRAQAEIAIEEADVIVMLTNVVNHVTDLDERIARLLYRTKKPVILAVNKADNPEQRNDIYDFYSLGLGDPIPVSSSHGTGIGDLLDEIVNDFPAEKDSEADDVISFSMIGRPNVGKSSLVNKLLGEDRVIVANEEGTTRDAVDTPFTKDGIKFKVVDTAGIRRRGKVYEKTEKYSVLRAMSAIERSDVVLLVLDASTGIREQDKHVAGYAHEAGRGIIIVVNKWDLPEKNSTSAKEFEREIRSEFQYLDYAPILFVSAKTGQRIDQIPSMVKEVYDNQNQRIQSSVLNDLLLEASKLVPTPMIKGKRLRVYYMTQVSTNPPTFVVFVNDPELMHFSYERFLINQLRQNFDFTGTPIKILPRKRK</sequence>
<dbReference type="EMBL" id="CP000033">
    <property type="protein sequence ID" value="AAV42820.1"/>
    <property type="molecule type" value="Genomic_DNA"/>
</dbReference>
<dbReference type="RefSeq" id="WP_011254303.1">
    <property type="nucleotide sequence ID" value="NC_006814.3"/>
</dbReference>
<dbReference type="RefSeq" id="YP_193851.1">
    <property type="nucleotide sequence ID" value="NC_006814.3"/>
</dbReference>
<dbReference type="SMR" id="Q5FKF4"/>
<dbReference type="STRING" id="272621.LBA0969"/>
<dbReference type="GeneID" id="93289917"/>
<dbReference type="KEGG" id="lac:LBA0969"/>
<dbReference type="PATRIC" id="fig|272621.13.peg.920"/>
<dbReference type="eggNOG" id="COG1160">
    <property type="taxonomic scope" value="Bacteria"/>
</dbReference>
<dbReference type="HOGENOM" id="CLU_016077_6_2_9"/>
<dbReference type="OrthoDB" id="9805918at2"/>
<dbReference type="BioCyc" id="LACI272621:G1G49-970-MONOMER"/>
<dbReference type="Proteomes" id="UP000006381">
    <property type="component" value="Chromosome"/>
</dbReference>
<dbReference type="GO" id="GO:0005525">
    <property type="term" value="F:GTP binding"/>
    <property type="evidence" value="ECO:0007669"/>
    <property type="project" value="UniProtKB-UniRule"/>
</dbReference>
<dbReference type="GO" id="GO:0043022">
    <property type="term" value="F:ribosome binding"/>
    <property type="evidence" value="ECO:0007669"/>
    <property type="project" value="TreeGrafter"/>
</dbReference>
<dbReference type="GO" id="GO:0042254">
    <property type="term" value="P:ribosome biogenesis"/>
    <property type="evidence" value="ECO:0007669"/>
    <property type="project" value="UniProtKB-KW"/>
</dbReference>
<dbReference type="CDD" id="cd01894">
    <property type="entry name" value="EngA1"/>
    <property type="match status" value="1"/>
</dbReference>
<dbReference type="CDD" id="cd01895">
    <property type="entry name" value="EngA2"/>
    <property type="match status" value="1"/>
</dbReference>
<dbReference type="FunFam" id="3.30.300.20:FF:000004">
    <property type="entry name" value="GTPase Der"/>
    <property type="match status" value="1"/>
</dbReference>
<dbReference type="FunFam" id="3.40.50.300:FF:000040">
    <property type="entry name" value="GTPase Der"/>
    <property type="match status" value="1"/>
</dbReference>
<dbReference type="FunFam" id="3.40.50.300:FF:000057">
    <property type="entry name" value="GTPase Der"/>
    <property type="match status" value="1"/>
</dbReference>
<dbReference type="Gene3D" id="3.30.300.20">
    <property type="match status" value="1"/>
</dbReference>
<dbReference type="Gene3D" id="3.40.50.300">
    <property type="entry name" value="P-loop containing nucleotide triphosphate hydrolases"/>
    <property type="match status" value="2"/>
</dbReference>
<dbReference type="HAMAP" id="MF_00195">
    <property type="entry name" value="GTPase_Der"/>
    <property type="match status" value="1"/>
</dbReference>
<dbReference type="InterPro" id="IPR031166">
    <property type="entry name" value="G_ENGA"/>
</dbReference>
<dbReference type="InterPro" id="IPR006073">
    <property type="entry name" value="GTP-bd"/>
</dbReference>
<dbReference type="InterPro" id="IPR016484">
    <property type="entry name" value="GTPase_Der"/>
</dbReference>
<dbReference type="InterPro" id="IPR032859">
    <property type="entry name" value="KH_dom-like"/>
</dbReference>
<dbReference type="InterPro" id="IPR015946">
    <property type="entry name" value="KH_dom-like_a/b"/>
</dbReference>
<dbReference type="InterPro" id="IPR027417">
    <property type="entry name" value="P-loop_NTPase"/>
</dbReference>
<dbReference type="InterPro" id="IPR005225">
    <property type="entry name" value="Small_GTP-bd"/>
</dbReference>
<dbReference type="NCBIfam" id="TIGR03594">
    <property type="entry name" value="GTPase_EngA"/>
    <property type="match status" value="1"/>
</dbReference>
<dbReference type="NCBIfam" id="TIGR00231">
    <property type="entry name" value="small_GTP"/>
    <property type="match status" value="2"/>
</dbReference>
<dbReference type="PANTHER" id="PTHR43834">
    <property type="entry name" value="GTPASE DER"/>
    <property type="match status" value="1"/>
</dbReference>
<dbReference type="PANTHER" id="PTHR43834:SF6">
    <property type="entry name" value="GTPASE DER"/>
    <property type="match status" value="1"/>
</dbReference>
<dbReference type="Pfam" id="PF14714">
    <property type="entry name" value="KH_dom-like"/>
    <property type="match status" value="1"/>
</dbReference>
<dbReference type="Pfam" id="PF01926">
    <property type="entry name" value="MMR_HSR1"/>
    <property type="match status" value="2"/>
</dbReference>
<dbReference type="PIRSF" id="PIRSF006485">
    <property type="entry name" value="GTP-binding_EngA"/>
    <property type="match status" value="1"/>
</dbReference>
<dbReference type="PRINTS" id="PR00326">
    <property type="entry name" value="GTP1OBG"/>
</dbReference>
<dbReference type="SUPFAM" id="SSF52540">
    <property type="entry name" value="P-loop containing nucleoside triphosphate hydrolases"/>
    <property type="match status" value="2"/>
</dbReference>
<dbReference type="PROSITE" id="PS51712">
    <property type="entry name" value="G_ENGA"/>
    <property type="match status" value="2"/>
</dbReference>
<comment type="function">
    <text evidence="1">GTPase that plays an essential role in the late steps of ribosome biogenesis.</text>
</comment>
<comment type="subunit">
    <text evidence="1">Associates with the 50S ribosomal subunit.</text>
</comment>
<comment type="similarity">
    <text evidence="1">Belongs to the TRAFAC class TrmE-Era-EngA-EngB-Septin-like GTPase superfamily. EngA (Der) GTPase family.</text>
</comment>
<accession>Q5FKF4</accession>
<keyword id="KW-0342">GTP-binding</keyword>
<keyword id="KW-0547">Nucleotide-binding</keyword>
<keyword id="KW-1185">Reference proteome</keyword>
<keyword id="KW-0677">Repeat</keyword>
<keyword id="KW-0690">Ribosome biogenesis</keyword>
<protein>
    <recommendedName>
        <fullName evidence="1">GTPase Der</fullName>
    </recommendedName>
    <alternativeName>
        <fullName evidence="1">GTP-binding protein EngA</fullName>
    </alternativeName>
</protein>
<evidence type="ECO:0000255" key="1">
    <source>
        <dbReference type="HAMAP-Rule" id="MF_00195"/>
    </source>
</evidence>